<protein>
    <recommendedName>
        <fullName evidence="6">ESX secretion system protein YueB</fullName>
    </recommendedName>
    <alternativeName>
        <fullName evidence="6">Bacteriophage SPP1 adsorption protein YueB</fullName>
    </alternativeName>
    <alternativeName>
        <fullName evidence="6">Bacteriophage SPP1 receptor protein YueB</fullName>
    </alternativeName>
</protein>
<name>YUEB_BACSU</name>
<organism>
    <name type="scientific">Bacillus subtilis (strain 168)</name>
    <dbReference type="NCBI Taxonomy" id="224308"/>
    <lineage>
        <taxon>Bacteria</taxon>
        <taxon>Bacillati</taxon>
        <taxon>Bacillota</taxon>
        <taxon>Bacilli</taxon>
        <taxon>Bacillales</taxon>
        <taxon>Bacillaceae</taxon>
        <taxon>Bacillus</taxon>
    </lineage>
</organism>
<proteinExistence type="evidence at protein level"/>
<gene>
    <name type="primary">yueB</name>
    <name type="ordered locus">BSU31860</name>
</gene>
<evidence type="ECO:0000255" key="1"/>
<evidence type="ECO:0000256" key="2">
    <source>
        <dbReference type="SAM" id="MobiDB-lite"/>
    </source>
</evidence>
<evidence type="ECO:0000269" key="3">
    <source>
    </source>
</evidence>
<evidence type="ECO:0000269" key="4">
    <source>
    </source>
</evidence>
<evidence type="ECO:0000269" key="5">
    <source>
    </source>
</evidence>
<evidence type="ECO:0000305" key="6"/>
<dbReference type="EMBL" id="AL009126">
    <property type="protein sequence ID" value="CAB15174.1"/>
    <property type="molecule type" value="Genomic_DNA"/>
</dbReference>
<dbReference type="PIR" id="C70007">
    <property type="entry name" value="C70007"/>
</dbReference>
<dbReference type="RefSeq" id="NP_391064.1">
    <property type="nucleotide sequence ID" value="NC_000964.3"/>
</dbReference>
<dbReference type="FunCoup" id="O32101">
    <property type="interactions" value="9"/>
</dbReference>
<dbReference type="IntAct" id="O32101">
    <property type="interactions" value="22"/>
</dbReference>
<dbReference type="STRING" id="224308.BSU31860"/>
<dbReference type="PaxDb" id="224308-BSU31860"/>
<dbReference type="EnsemblBacteria" id="CAB15174">
    <property type="protein sequence ID" value="CAB15174"/>
    <property type="gene ID" value="BSU_31860"/>
</dbReference>
<dbReference type="GeneID" id="936567"/>
<dbReference type="KEGG" id="bsu:BSU31860"/>
<dbReference type="PATRIC" id="fig|224308.179.peg.3452"/>
<dbReference type="eggNOG" id="COG1511">
    <property type="taxonomic scope" value="Bacteria"/>
</dbReference>
<dbReference type="InParanoid" id="O32101"/>
<dbReference type="OrthoDB" id="4974788at2"/>
<dbReference type="BioCyc" id="BSUB:BSU31860-MONOMER"/>
<dbReference type="Proteomes" id="UP000001570">
    <property type="component" value="Chromosome"/>
</dbReference>
<dbReference type="GO" id="GO:0005886">
    <property type="term" value="C:plasma membrane"/>
    <property type="evidence" value="ECO:0000318"/>
    <property type="project" value="GO_Central"/>
</dbReference>
<dbReference type="Gene3D" id="1.10.287.1490">
    <property type="match status" value="1"/>
</dbReference>
<dbReference type="Gene3D" id="3.40.1710.10">
    <property type="entry name" value="abc type-2 transporter like domain"/>
    <property type="match status" value="1"/>
</dbReference>
<dbReference type="InterPro" id="IPR051449">
    <property type="entry name" value="ABC-2_transporter_component"/>
</dbReference>
<dbReference type="InterPro" id="IPR023838">
    <property type="entry name" value="T7SS_EsaA"/>
</dbReference>
<dbReference type="NCBIfam" id="TIGR03929">
    <property type="entry name" value="T7_esaA_Nterm"/>
    <property type="match status" value="1"/>
</dbReference>
<dbReference type="PANTHER" id="PTHR30294">
    <property type="entry name" value="MEMBRANE COMPONENT OF ABC TRANSPORTER YHHJ-RELATED"/>
    <property type="match status" value="1"/>
</dbReference>
<dbReference type="PANTHER" id="PTHR30294:SF29">
    <property type="entry name" value="MULTIDRUG ABC TRANSPORTER PERMEASE YBHS-RELATED"/>
    <property type="match status" value="1"/>
</dbReference>
<comment type="function">
    <text evidence="3 4 5">Required for YukE secretion. Probable component or regulator of the ESX/ESAT-6-like secretion system (BsEss) (PubMed:23861817, PubMed:24798022). Bacteriophage SPP1 receptor. Essential for the irreversible adsorption of the bacteriophage (PubMed:15576783).</text>
</comment>
<comment type="subcellular location">
    <subcellularLocation>
        <location evidence="6">Cell membrane</location>
        <topology evidence="1">Multi-pass membrane protein</topology>
    </subcellularLocation>
</comment>
<comment type="disruption phenotype">
    <text evidence="4 5">Cells lacking this gene are blocked in YukE secretion.</text>
</comment>
<comment type="similarity">
    <text evidence="6">Belongs to the EsaA family.</text>
</comment>
<sequence>MTEQRKSLIKLISAVIIILLLPVLFFRFIGDDPTKKAVNSTRQIAVVNEDTGVLSDEVKSDEEDKSAQFGKEVAAVLGERPDYSWTVVNRSAAETGLASKKYDAIVYIPSDFSKNILSYDKDHPQKATLEFSIQDNLNAVNKEKVQRELEDAQKTMNKKMSALYWNFVSQKVDNIRGEFDKIVNKESEFQNVMYNFYKPSSNDLAGEIKQQKDLIDELKKSMNEAQGTTKEKASTAEEAKNTLKEFIDTVERYKEYQENQKKLLLAAQDSTQQQIRTGLDAIQAQQKANQFSERMSGLATGIGQAKTQIGLTNLALNNAEKLRQNQVPLQEMGMKKIENDMFNAFLSRYKSQYEAIKYQNLNQLQENIGKNRLSLLKPKESDEKEDGEDTSDNKDDTDKEDIEDIKLDLEKQRDELKNVATEIKDISEGLKEPEQEKPTTPDAEEPSTDDSPNTEEPSNDIPTSDDQPTNEDTGSSEEGTQDNGSQNDVQTNIETGQKHQESSKNVPEQDTNTENTGTSKTDFSLIELADENDGSNQSDGLQGDGADGETDISGAKKRLNEAAIKLEEIENALQEKQEEHNNKLEKHIDELNQEIKELNKTVSKLNDQIGDLTKKLVDFDNNVNDAYRLIYNLEDEIIQTLQSRGYIDQKEKLSSIFSSRIETDNISNLMKYYNSLNLYKSTLNDNLDLGSLTIIKGEVIQEQDGNVQSVLALTPEESASWEALKNNTMQTDEDINSFIDGMTKFADDYSGYIRDSQAGVLDELTKISESAAKASEQLVTGATQESATFSNDGLSGTMALSVQDTVGQEVLQMSDMMGSLSDRQSGIIDYTTNMQQSVNDVQAKADTLNNNWGKNVASTKLVRNDVYGILGNTLVDGQNNGYVYDYLANPLKISGEVPEEKIQTVPPVVILVIVLISSLLIGYFSSYYQNAPLLVKGALFGILNILVGLMISLFGLNIYSLPDDQTIKWSVFTILLLVASSAFIRTAFRFGSIPGWVASAAMILFYVAPLIDLIMPNFTFEDPVSKVYIDIQYGTGHLFTMGITVLLIITVIAVALPLIIRLMAEHTAESDETYEA</sequence>
<feature type="chain" id="PRO_0000066542" description="ESX secretion system protein YueB">
    <location>
        <begin position="1"/>
        <end position="1076"/>
    </location>
</feature>
<feature type="transmembrane region" description="Helical" evidence="1">
    <location>
        <begin position="9"/>
        <end position="29"/>
    </location>
</feature>
<feature type="transmembrane region" description="Helical" evidence="1">
    <location>
        <begin position="904"/>
        <end position="924"/>
    </location>
</feature>
<feature type="transmembrane region" description="Helical" evidence="1">
    <location>
        <begin position="938"/>
        <end position="958"/>
    </location>
</feature>
<feature type="transmembrane region" description="Helical" evidence="1">
    <location>
        <begin position="964"/>
        <end position="984"/>
    </location>
</feature>
<feature type="transmembrane region" description="Helical" evidence="1">
    <location>
        <begin position="995"/>
        <end position="1015"/>
    </location>
</feature>
<feature type="transmembrane region" description="Helical" evidence="1">
    <location>
        <begin position="1040"/>
        <end position="1060"/>
    </location>
</feature>
<feature type="region of interest" description="Disordered" evidence="2">
    <location>
        <begin position="372"/>
        <end position="404"/>
    </location>
</feature>
<feature type="region of interest" description="Disordered" evidence="2">
    <location>
        <begin position="423"/>
        <end position="552"/>
    </location>
</feature>
<feature type="coiled-coil region" evidence="1">
    <location>
        <begin position="552"/>
        <end position="622"/>
    </location>
</feature>
<feature type="compositionally biased region" description="Basic and acidic residues" evidence="2">
    <location>
        <begin position="423"/>
        <end position="439"/>
    </location>
</feature>
<feature type="compositionally biased region" description="Polar residues" evidence="2">
    <location>
        <begin position="449"/>
        <end position="495"/>
    </location>
</feature>
<feature type="compositionally biased region" description="Polar residues" evidence="2">
    <location>
        <begin position="503"/>
        <end position="522"/>
    </location>
</feature>
<reference key="1">
    <citation type="journal article" date="1997" name="Nature">
        <title>The complete genome sequence of the Gram-positive bacterium Bacillus subtilis.</title>
        <authorList>
            <person name="Kunst F."/>
            <person name="Ogasawara N."/>
            <person name="Moszer I."/>
            <person name="Albertini A.M."/>
            <person name="Alloni G."/>
            <person name="Azevedo V."/>
            <person name="Bertero M.G."/>
            <person name="Bessieres P."/>
            <person name="Bolotin A."/>
            <person name="Borchert S."/>
            <person name="Borriss R."/>
            <person name="Boursier L."/>
            <person name="Brans A."/>
            <person name="Braun M."/>
            <person name="Brignell S.C."/>
            <person name="Bron S."/>
            <person name="Brouillet S."/>
            <person name="Bruschi C.V."/>
            <person name="Caldwell B."/>
            <person name="Capuano V."/>
            <person name="Carter N.M."/>
            <person name="Choi S.-K."/>
            <person name="Codani J.-J."/>
            <person name="Connerton I.F."/>
            <person name="Cummings N.J."/>
            <person name="Daniel R.A."/>
            <person name="Denizot F."/>
            <person name="Devine K.M."/>
            <person name="Duesterhoeft A."/>
            <person name="Ehrlich S.D."/>
            <person name="Emmerson P.T."/>
            <person name="Entian K.-D."/>
            <person name="Errington J."/>
            <person name="Fabret C."/>
            <person name="Ferrari E."/>
            <person name="Foulger D."/>
            <person name="Fritz C."/>
            <person name="Fujita M."/>
            <person name="Fujita Y."/>
            <person name="Fuma S."/>
            <person name="Galizzi A."/>
            <person name="Galleron N."/>
            <person name="Ghim S.-Y."/>
            <person name="Glaser P."/>
            <person name="Goffeau A."/>
            <person name="Golightly E.J."/>
            <person name="Grandi G."/>
            <person name="Guiseppi G."/>
            <person name="Guy B.J."/>
            <person name="Haga K."/>
            <person name="Haiech J."/>
            <person name="Harwood C.R."/>
            <person name="Henaut A."/>
            <person name="Hilbert H."/>
            <person name="Holsappel S."/>
            <person name="Hosono S."/>
            <person name="Hullo M.-F."/>
            <person name="Itaya M."/>
            <person name="Jones L.-M."/>
            <person name="Joris B."/>
            <person name="Karamata D."/>
            <person name="Kasahara Y."/>
            <person name="Klaerr-Blanchard M."/>
            <person name="Klein C."/>
            <person name="Kobayashi Y."/>
            <person name="Koetter P."/>
            <person name="Koningstein G."/>
            <person name="Krogh S."/>
            <person name="Kumano M."/>
            <person name="Kurita K."/>
            <person name="Lapidus A."/>
            <person name="Lardinois S."/>
            <person name="Lauber J."/>
            <person name="Lazarevic V."/>
            <person name="Lee S.-M."/>
            <person name="Levine A."/>
            <person name="Liu H."/>
            <person name="Masuda S."/>
            <person name="Mauel C."/>
            <person name="Medigue C."/>
            <person name="Medina N."/>
            <person name="Mellado R.P."/>
            <person name="Mizuno M."/>
            <person name="Moestl D."/>
            <person name="Nakai S."/>
            <person name="Noback M."/>
            <person name="Noone D."/>
            <person name="O'Reilly M."/>
            <person name="Ogawa K."/>
            <person name="Ogiwara A."/>
            <person name="Oudega B."/>
            <person name="Park S.-H."/>
            <person name="Parro V."/>
            <person name="Pohl T.M."/>
            <person name="Portetelle D."/>
            <person name="Porwollik S."/>
            <person name="Prescott A.M."/>
            <person name="Presecan E."/>
            <person name="Pujic P."/>
            <person name="Purnelle B."/>
            <person name="Rapoport G."/>
            <person name="Rey M."/>
            <person name="Reynolds S."/>
            <person name="Rieger M."/>
            <person name="Rivolta C."/>
            <person name="Rocha E."/>
            <person name="Roche B."/>
            <person name="Rose M."/>
            <person name="Sadaie Y."/>
            <person name="Sato T."/>
            <person name="Scanlan E."/>
            <person name="Schleich S."/>
            <person name="Schroeter R."/>
            <person name="Scoffone F."/>
            <person name="Sekiguchi J."/>
            <person name="Sekowska A."/>
            <person name="Seror S.J."/>
            <person name="Serror P."/>
            <person name="Shin B.-S."/>
            <person name="Soldo B."/>
            <person name="Sorokin A."/>
            <person name="Tacconi E."/>
            <person name="Takagi T."/>
            <person name="Takahashi H."/>
            <person name="Takemaru K."/>
            <person name="Takeuchi M."/>
            <person name="Tamakoshi A."/>
            <person name="Tanaka T."/>
            <person name="Terpstra P."/>
            <person name="Tognoni A."/>
            <person name="Tosato V."/>
            <person name="Uchiyama S."/>
            <person name="Vandenbol M."/>
            <person name="Vannier F."/>
            <person name="Vassarotti A."/>
            <person name="Viari A."/>
            <person name="Wambutt R."/>
            <person name="Wedler E."/>
            <person name="Wedler H."/>
            <person name="Weitzenegger T."/>
            <person name="Winters P."/>
            <person name="Wipat A."/>
            <person name="Yamamoto H."/>
            <person name="Yamane K."/>
            <person name="Yasumoto K."/>
            <person name="Yata K."/>
            <person name="Yoshida K."/>
            <person name="Yoshikawa H.-F."/>
            <person name="Zumstein E."/>
            <person name="Yoshikawa H."/>
            <person name="Danchin A."/>
        </authorList>
    </citation>
    <scope>NUCLEOTIDE SEQUENCE [LARGE SCALE GENOMIC DNA]</scope>
    <source>
        <strain>168</strain>
    </source>
</reference>
<reference key="2">
    <citation type="journal article" date="2004" name="J. Bacteriol.">
        <title>Bacillus subtilis operon encoding a membrane receptor for bacteriophage SPP1.</title>
        <authorList>
            <person name="Sao-Jose C."/>
            <person name="Baptista C."/>
            <person name="Santos M.A."/>
        </authorList>
    </citation>
    <scope>FUNCTION AS A RECEPTOR FOR SPP1</scope>
</reference>
<reference key="3">
    <citation type="journal article" date="2013" name="PLoS ONE">
        <title>High levels of DegU-P activate an Esat-6-like secretion system in Bacillus subtilis.</title>
        <authorList>
            <person name="Baptista C."/>
            <person name="Barreto H.C."/>
            <person name="Sao-Jose C."/>
        </authorList>
    </citation>
    <scope>FUNCTION</scope>
    <scope>DISRUPTION PHENOTYPE</scope>
    <source>
        <strain>168</strain>
        <strain>ATCC 6051</strain>
    </source>
</reference>
<reference key="4">
    <citation type="journal article" date="2014" name="PLoS ONE">
        <title>The ESX system in Bacillus subtilis mediates protein secretion.</title>
        <authorList>
            <person name="Huppert L.A."/>
            <person name="Ramsdell T.L."/>
            <person name="Chase M.R."/>
            <person name="Sarracino D.A."/>
            <person name="Fortune S.M."/>
            <person name="Burton B.M."/>
        </authorList>
    </citation>
    <scope>FUNCTION</scope>
    <scope>DISRUPTION PHENOTYPE</scope>
    <source>
        <strain>168 / PY79</strain>
    </source>
</reference>
<keyword id="KW-1003">Cell membrane</keyword>
<keyword id="KW-0175">Coiled coil</keyword>
<keyword id="KW-0472">Membrane</keyword>
<keyword id="KW-1185">Reference proteome</keyword>
<keyword id="KW-0812">Transmembrane</keyword>
<keyword id="KW-1133">Transmembrane helix</keyword>
<accession>O32101</accession>